<protein>
    <recommendedName>
        <fullName evidence="1 4">Dephospho-CoA kinase</fullName>
        <ecNumber evidence="1 2">2.7.1.24</ecNumber>
    </recommendedName>
    <alternativeName>
        <fullName evidence="1 4">Dephosphocoenzyme A kinase</fullName>
    </alternativeName>
</protein>
<gene>
    <name evidence="1 4" type="primary">coaE</name>
    <name type="synonym">yacE</name>
    <name type="ordered locus">b0103</name>
    <name type="ordered locus">JW0100</name>
</gene>
<organism>
    <name type="scientific">Escherichia coli (strain K12)</name>
    <dbReference type="NCBI Taxonomy" id="83333"/>
    <lineage>
        <taxon>Bacteria</taxon>
        <taxon>Pseudomonadati</taxon>
        <taxon>Pseudomonadota</taxon>
        <taxon>Gammaproteobacteria</taxon>
        <taxon>Enterobacterales</taxon>
        <taxon>Enterobacteriaceae</taxon>
        <taxon>Escherichia</taxon>
    </lineage>
</organism>
<sequence length="206" mass="22622">MRYIVALTGGIGSGKSTVANAFADLGINVIDADIIARQVVEPGAPALHAIADHFGANMIAADGTLQRRALRERIFANPEEKNWLNALLHPLIQQETQHQIQQATSPYVLWVVPLLVENSLYKKANRVLVVDVSPETQLKRTMQRDDVTREHVEQILAAQATREARLAVADDVIDNNGAPDAIASDVARLHAHYLQLASQFVSQEKP</sequence>
<dbReference type="EC" id="2.7.1.24" evidence="1 2"/>
<dbReference type="EMBL" id="U00096">
    <property type="protein sequence ID" value="AAC73214.1"/>
    <property type="molecule type" value="Genomic_DNA"/>
</dbReference>
<dbReference type="EMBL" id="AP009048">
    <property type="protein sequence ID" value="BAE76040.1"/>
    <property type="molecule type" value="Genomic_DNA"/>
</dbReference>
<dbReference type="PIR" id="G64732">
    <property type="entry name" value="G64732"/>
</dbReference>
<dbReference type="RefSeq" id="NP_414645.1">
    <property type="nucleotide sequence ID" value="NC_000913.3"/>
</dbReference>
<dbReference type="RefSeq" id="WP_001269520.1">
    <property type="nucleotide sequence ID" value="NZ_STEB01000010.1"/>
</dbReference>
<dbReference type="PDB" id="1N3B">
    <property type="method" value="X-ray"/>
    <property type="resolution" value="1.80 A"/>
    <property type="chains" value="A/B/C=1-206"/>
</dbReference>
<dbReference type="PDB" id="1T3H">
    <property type="method" value="X-ray"/>
    <property type="resolution" value="2.50 A"/>
    <property type="chains" value="A/B/C=1-206"/>
</dbReference>
<dbReference type="PDB" id="1VHL">
    <property type="method" value="X-ray"/>
    <property type="resolution" value="1.65 A"/>
    <property type="chains" value="A/B/C=2-206"/>
</dbReference>
<dbReference type="PDB" id="1VHT">
    <property type="method" value="X-ray"/>
    <property type="resolution" value="1.59 A"/>
    <property type="chains" value="A/B/C=2-206"/>
</dbReference>
<dbReference type="PDB" id="1VIY">
    <property type="method" value="X-ray"/>
    <property type="resolution" value="1.89 A"/>
    <property type="chains" value="A/B/C=2-206"/>
</dbReference>
<dbReference type="PDB" id="6ARI">
    <property type="method" value="X-ray"/>
    <property type="resolution" value="2.00 A"/>
    <property type="chains" value="A/B=1-206"/>
</dbReference>
<dbReference type="PDBsum" id="1N3B"/>
<dbReference type="PDBsum" id="1T3H"/>
<dbReference type="PDBsum" id="1VHL"/>
<dbReference type="PDBsum" id="1VHT"/>
<dbReference type="PDBsum" id="1VIY"/>
<dbReference type="PDBsum" id="6ARI"/>
<dbReference type="SMR" id="P0A6I9"/>
<dbReference type="BioGRID" id="4261116">
    <property type="interactions" value="230"/>
</dbReference>
<dbReference type="DIP" id="DIP-47935N"/>
<dbReference type="FunCoup" id="P0A6I9">
    <property type="interactions" value="671"/>
</dbReference>
<dbReference type="IntAct" id="P0A6I9">
    <property type="interactions" value="1"/>
</dbReference>
<dbReference type="STRING" id="511145.b0103"/>
<dbReference type="DrugBank" id="DB01690">
    <property type="generic name" value="Bis(Adenosine)-5'-Triphosphate"/>
</dbReference>
<dbReference type="jPOST" id="P0A6I9"/>
<dbReference type="PaxDb" id="511145-b0103"/>
<dbReference type="EnsemblBacteria" id="AAC73214">
    <property type="protein sequence ID" value="AAC73214"/>
    <property type="gene ID" value="b0103"/>
</dbReference>
<dbReference type="GeneID" id="93777332"/>
<dbReference type="GeneID" id="949060"/>
<dbReference type="KEGG" id="ecj:JW0100"/>
<dbReference type="KEGG" id="eco:b0103"/>
<dbReference type="KEGG" id="ecoc:C3026_00420"/>
<dbReference type="PATRIC" id="fig|1411691.4.peg.2178"/>
<dbReference type="EchoBASE" id="EB2218"/>
<dbReference type="eggNOG" id="COG0237">
    <property type="taxonomic scope" value="Bacteria"/>
</dbReference>
<dbReference type="HOGENOM" id="CLU_057180_1_2_6"/>
<dbReference type="InParanoid" id="P0A6I9"/>
<dbReference type="OMA" id="CQMDIEQ"/>
<dbReference type="OrthoDB" id="9812943at2"/>
<dbReference type="PhylomeDB" id="P0A6I9"/>
<dbReference type="BioCyc" id="EcoCyc:EG12312-MONOMER"/>
<dbReference type="BioCyc" id="MetaCyc:EG12312-MONOMER"/>
<dbReference type="BRENDA" id="2.7.1.24">
    <property type="organism ID" value="2026"/>
</dbReference>
<dbReference type="SABIO-RK" id="P0A6I9"/>
<dbReference type="UniPathway" id="UPA00241">
    <property type="reaction ID" value="UER00356"/>
</dbReference>
<dbReference type="EvolutionaryTrace" id="P0A6I9"/>
<dbReference type="PRO" id="PR:P0A6I9"/>
<dbReference type="Proteomes" id="UP000000625">
    <property type="component" value="Chromosome"/>
</dbReference>
<dbReference type="GO" id="GO:0005737">
    <property type="term" value="C:cytoplasm"/>
    <property type="evidence" value="ECO:0007669"/>
    <property type="project" value="UniProtKB-SubCell"/>
</dbReference>
<dbReference type="GO" id="GO:0005524">
    <property type="term" value="F:ATP binding"/>
    <property type="evidence" value="ECO:0007669"/>
    <property type="project" value="UniProtKB-UniRule"/>
</dbReference>
<dbReference type="GO" id="GO:0004140">
    <property type="term" value="F:dephospho-CoA kinase activity"/>
    <property type="evidence" value="ECO:0000314"/>
    <property type="project" value="EcoCyc"/>
</dbReference>
<dbReference type="GO" id="GO:0015937">
    <property type="term" value="P:coenzyme A biosynthetic process"/>
    <property type="evidence" value="ECO:0000314"/>
    <property type="project" value="EcoCyc"/>
</dbReference>
<dbReference type="CDD" id="cd02022">
    <property type="entry name" value="DPCK"/>
    <property type="match status" value="1"/>
</dbReference>
<dbReference type="FunFam" id="3.40.50.300:FF:000518">
    <property type="entry name" value="Dephospho-CoA kinase"/>
    <property type="match status" value="1"/>
</dbReference>
<dbReference type="Gene3D" id="3.40.50.300">
    <property type="entry name" value="P-loop containing nucleotide triphosphate hydrolases"/>
    <property type="match status" value="1"/>
</dbReference>
<dbReference type="HAMAP" id="MF_00376">
    <property type="entry name" value="Dephospho_CoA_kinase"/>
    <property type="match status" value="1"/>
</dbReference>
<dbReference type="InterPro" id="IPR001977">
    <property type="entry name" value="Depp_CoAkinase"/>
</dbReference>
<dbReference type="InterPro" id="IPR027417">
    <property type="entry name" value="P-loop_NTPase"/>
</dbReference>
<dbReference type="NCBIfam" id="TIGR00152">
    <property type="entry name" value="dephospho-CoA kinase"/>
    <property type="match status" value="1"/>
</dbReference>
<dbReference type="PANTHER" id="PTHR10695:SF46">
    <property type="entry name" value="BIFUNCTIONAL COENZYME A SYNTHASE-RELATED"/>
    <property type="match status" value="1"/>
</dbReference>
<dbReference type="PANTHER" id="PTHR10695">
    <property type="entry name" value="DEPHOSPHO-COA KINASE-RELATED"/>
    <property type="match status" value="1"/>
</dbReference>
<dbReference type="Pfam" id="PF01121">
    <property type="entry name" value="CoaE"/>
    <property type="match status" value="1"/>
</dbReference>
<dbReference type="SUPFAM" id="SSF52540">
    <property type="entry name" value="P-loop containing nucleoside triphosphate hydrolases"/>
    <property type="match status" value="1"/>
</dbReference>
<dbReference type="PROSITE" id="PS51219">
    <property type="entry name" value="DPCK"/>
    <property type="match status" value="1"/>
</dbReference>
<reference key="1">
    <citation type="journal article" date="1994" name="Nucleic Acids Res.">
        <title>Systematic sequencing of the Escherichia coli genome: analysis of the 2.4-4.1 min (110,917-193,643 bp) region.</title>
        <authorList>
            <person name="Fujita N."/>
            <person name="Mori H."/>
            <person name="Yura T."/>
            <person name="Ishihama A."/>
        </authorList>
    </citation>
    <scope>NUCLEOTIDE SEQUENCE [LARGE SCALE GENOMIC DNA]</scope>
    <source>
        <strain>K12 / W3110 / ATCC 27325 / DSM 5911</strain>
    </source>
</reference>
<reference key="2">
    <citation type="journal article" date="1997" name="Science">
        <title>The complete genome sequence of Escherichia coli K-12.</title>
        <authorList>
            <person name="Blattner F.R."/>
            <person name="Plunkett G. III"/>
            <person name="Bloch C.A."/>
            <person name="Perna N.T."/>
            <person name="Burland V."/>
            <person name="Riley M."/>
            <person name="Collado-Vides J."/>
            <person name="Glasner J.D."/>
            <person name="Rode C.K."/>
            <person name="Mayhew G.F."/>
            <person name="Gregor J."/>
            <person name="Davis N.W."/>
            <person name="Kirkpatrick H.A."/>
            <person name="Goeden M.A."/>
            <person name="Rose D.J."/>
            <person name="Mau B."/>
            <person name="Shao Y."/>
        </authorList>
    </citation>
    <scope>NUCLEOTIDE SEQUENCE [LARGE SCALE GENOMIC DNA]</scope>
    <source>
        <strain>K12 / MG1655 / ATCC 47076</strain>
    </source>
</reference>
<reference key="3">
    <citation type="journal article" date="2006" name="Mol. Syst. Biol.">
        <title>Highly accurate genome sequences of Escherichia coli K-12 strains MG1655 and W3110.</title>
        <authorList>
            <person name="Hayashi K."/>
            <person name="Morooka N."/>
            <person name="Yamamoto Y."/>
            <person name="Fujita K."/>
            <person name="Isono K."/>
            <person name="Choi S."/>
            <person name="Ohtsubo E."/>
            <person name="Baba T."/>
            <person name="Wanner B.L."/>
            <person name="Mori H."/>
            <person name="Horiuchi T."/>
        </authorList>
    </citation>
    <scope>NUCLEOTIDE SEQUENCE [LARGE SCALE GENOMIC DNA]</scope>
    <source>
        <strain>K12 / W3110 / ATCC 27325 / DSM 5911</strain>
    </source>
</reference>
<reference key="4">
    <citation type="journal article" date="2001" name="J. Bacteriol.">
        <title>Identification of yacE (coaE) as the structural gene for dephosphocoenzyme A kinase in Escherichia coli K-12.</title>
        <authorList>
            <person name="Mishra P.K."/>
            <person name="Park P.K."/>
            <person name="Drueckhammer D.G."/>
        </authorList>
    </citation>
    <scope>PROTEIN SEQUENCE OF 2-12</scope>
    <scope>FUNCTION</scope>
    <scope>CATALYTIC ACTIVITY</scope>
    <scope>BIOPHYSICOCHEMICAL PROPERTIES</scope>
    <scope>PATHWAY</scope>
    <scope>SUBUNIT</scope>
    <source>
        <strain>K12 / W3110 / ATCC 27325 / DSM 5911</strain>
    </source>
</reference>
<reference key="5">
    <citation type="journal article" date="1999" name="Electrophoresis">
        <title>Enrichment of low abundance proteins of Escherichia coli by hydroxyapatite chromatography.</title>
        <authorList>
            <person name="Fountoulakis M."/>
            <person name="Takacs M.-F."/>
            <person name="Berndt P."/>
            <person name="Langen H."/>
            <person name="Takacs B."/>
        </authorList>
    </citation>
    <scope>IDENTIFICATION BY MASS SPECTROMETRY</scope>
    <source>
        <strain>B / BL21</strain>
    </source>
</reference>
<reference evidence="8" key="6">
    <citation type="journal article" date="2003" name="Protein Sci.">
        <title>Crystal structure of a trimeric form of dephosphocoenzyme A kinase from Escherichia coli.</title>
        <authorList>
            <person name="O'Toole N."/>
            <person name="Barbosa J.A."/>
            <person name="Li Y."/>
            <person name="Hung L.W."/>
            <person name="Matte A."/>
            <person name="Cygler M."/>
        </authorList>
    </citation>
    <scope>X-RAY CRYSTALLOGRAPHY (1.80 ANGSTROMS)</scope>
    <scope>SUBUNIT</scope>
</reference>
<reference evidence="9" key="7">
    <citation type="submission" date="2004-04" db="PDB data bank">
        <title>X-ray structure of dephospho-CoA kinase from E. coli Norteast Structural Genomics Consortium Target ER57.</title>
        <authorList>
            <person name="Kuzin A.P."/>
            <person name="Chen Y."/>
            <person name="Forouhar F."/>
            <person name="Edstrom W."/>
            <person name="Benach J."/>
            <person name="Vorobiev S."/>
            <person name="Acton T."/>
            <person name="Shastry R."/>
            <person name="Ma L.-C."/>
            <person name="Xia R."/>
            <person name="Montelione G."/>
            <person name="Tong L."/>
            <person name="Hunt J."/>
        </authorList>
    </citation>
    <scope>X-RAY CRYSTALLOGRAPHY (2.50 ANGSTROMS)</scope>
</reference>
<reference evidence="10 11 12" key="8">
    <citation type="journal article" date="2005" name="Proteins">
        <title>Structural analysis of a set of proteins resulting from a bacterial genomics project.</title>
        <authorList>
            <person name="Badger J."/>
            <person name="Sauder J.M."/>
            <person name="Adams J.M."/>
            <person name="Antonysamy S."/>
            <person name="Bain K."/>
            <person name="Bergseid M.G."/>
            <person name="Buchanan S.G."/>
            <person name="Buchanan M.D."/>
            <person name="Batiyenko Y."/>
            <person name="Christopher J.A."/>
            <person name="Emtage S."/>
            <person name="Eroshkina A."/>
            <person name="Feil I."/>
            <person name="Furlong E.B."/>
            <person name="Gajiwala K.S."/>
            <person name="Gao X."/>
            <person name="He D."/>
            <person name="Hendle J."/>
            <person name="Huber A."/>
            <person name="Hoda K."/>
            <person name="Kearins P."/>
            <person name="Kissinger C."/>
            <person name="Laubert B."/>
            <person name="Lewis H.A."/>
            <person name="Lin J."/>
            <person name="Loomis K."/>
            <person name="Lorimer D."/>
            <person name="Louie G."/>
            <person name="Maletic M."/>
            <person name="Marsh C.D."/>
            <person name="Miller I."/>
            <person name="Molinari J."/>
            <person name="Muller-Dieckmann H.J."/>
            <person name="Newman J.M."/>
            <person name="Noland B.W."/>
            <person name="Pagarigan B."/>
            <person name="Park F."/>
            <person name="Peat T.S."/>
            <person name="Post K.W."/>
            <person name="Radojicic S."/>
            <person name="Ramos A."/>
            <person name="Romero R."/>
            <person name="Rutter M.E."/>
            <person name="Sanderson W.E."/>
            <person name="Schwinn K.D."/>
            <person name="Tresser J."/>
            <person name="Winhoven J."/>
            <person name="Wright T.A."/>
            <person name="Wu L."/>
            <person name="Xu J."/>
            <person name="Harris T.J.R."/>
        </authorList>
    </citation>
    <scope>X-RAY CRYSTALLOGRAPHY (1.59 ANGSTROMS) OF 2-206 IN COMPLEXES WITH ADP AND BIS(5'-ADENOSYL) TRIPHOSPHATE</scope>
</reference>
<reference evidence="13" key="9">
    <citation type="submission" date="2017-08" db="PDB data bank">
        <title>Crystal structure of a dephospho-CoA kinase from Escherichia coli in complex with inhibitor CM078.</title>
        <authorList>
            <person name="Mayclin S.J."/>
            <person name="Dranow D.M."/>
            <person name="Lorimer D."/>
            <person name="Edwards T.E."/>
        </authorList>
    </citation>
    <scope>X-RAY CRYSTALLOGRAPHY (2.00 ANGSTROMS) IN COMPLEX WITH INHIBITOR CM078</scope>
</reference>
<accession>P0A6I9</accession>
<accession>P36679</accession>
<accession>P75646</accession>
<accession>Q2MCG6</accession>
<comment type="function">
    <text evidence="1 2">Catalyzes the phosphorylation of the 3'-hydroxyl group of dephosphocoenzyme A to form coenzyme A.</text>
</comment>
<comment type="catalytic activity">
    <reaction evidence="1 2">
        <text>3'-dephospho-CoA + ATP = ADP + CoA + H(+)</text>
        <dbReference type="Rhea" id="RHEA:18245"/>
        <dbReference type="ChEBI" id="CHEBI:15378"/>
        <dbReference type="ChEBI" id="CHEBI:30616"/>
        <dbReference type="ChEBI" id="CHEBI:57287"/>
        <dbReference type="ChEBI" id="CHEBI:57328"/>
        <dbReference type="ChEBI" id="CHEBI:456216"/>
        <dbReference type="EC" id="2.7.1.24"/>
    </reaction>
</comment>
<comment type="biophysicochemical properties">
    <kinetics>
        <KM evidence="2">0.74 mM for dephospho-CoA</KM>
        <KM evidence="2">0.14 mM for ATP</KM>
    </kinetics>
    <phDependence>
        <text evidence="2">Optimum pH is 8.5.</text>
    </phDependence>
</comment>
<comment type="pathway">
    <text evidence="1 6">Cofactor biosynthesis; coenzyme A biosynthesis; CoA from (R)-pantothenate: step 5/5.</text>
</comment>
<comment type="subunit">
    <text evidence="2 3">Monomer (PubMed:11292795, PubMed:12538896). Forms homotrimers in the presence of sulfate. The trimeric form exists in solution in equilibrium with the monomeric form (PubMed:12538896).</text>
</comment>
<comment type="subcellular location">
    <subcellularLocation>
        <location evidence="1 5">Cytoplasm</location>
    </subcellularLocation>
</comment>
<comment type="similarity">
    <text evidence="1 5">Belongs to the CoaE family.</text>
</comment>
<proteinExistence type="evidence at protein level"/>
<name>COAE_ECOLI</name>
<feature type="chain" id="PRO_0000172940" description="Dephospho-CoA kinase">
    <location>
        <begin position="1"/>
        <end position="206"/>
    </location>
</feature>
<feature type="domain" description="DPCK" evidence="1">
    <location>
        <begin position="4"/>
        <end position="200"/>
    </location>
</feature>
<feature type="binding site" evidence="1 7">
    <location>
        <begin position="12"/>
        <end position="17"/>
    </location>
    <ligand>
        <name>ATP</name>
        <dbReference type="ChEBI" id="CHEBI:30616"/>
    </ligand>
</feature>
<feature type="binding site" evidence="7">
    <location>
        <position position="144"/>
    </location>
    <ligand>
        <name>ATP</name>
        <dbReference type="ChEBI" id="CHEBI:30616"/>
    </ligand>
</feature>
<feature type="binding site" evidence="7">
    <location>
        <begin position="175"/>
        <end position="177"/>
    </location>
    <ligand>
        <name>ATP</name>
        <dbReference type="ChEBI" id="CHEBI:30616"/>
    </ligand>
</feature>
<feature type="sequence conflict" description="In Ref. 1." evidence="5" ref="1">
    <original>ERI</original>
    <variation>DGL</variation>
    <location>
        <begin position="72"/>
        <end position="74"/>
    </location>
</feature>
<feature type="sequence conflict" description="In Ref. 1." evidence="5" ref="1">
    <original>A</original>
    <variation>V</variation>
    <location>
        <position position="86"/>
    </location>
</feature>
<feature type="strand" evidence="15">
    <location>
        <begin position="3"/>
        <end position="8"/>
    </location>
</feature>
<feature type="helix" evidence="15">
    <location>
        <begin position="15"/>
        <end position="24"/>
    </location>
</feature>
<feature type="strand" evidence="15">
    <location>
        <begin position="28"/>
        <end position="31"/>
    </location>
</feature>
<feature type="helix" evidence="15">
    <location>
        <begin position="32"/>
        <end position="38"/>
    </location>
</feature>
<feature type="helix" evidence="15">
    <location>
        <begin position="46"/>
        <end position="54"/>
    </location>
</feature>
<feature type="helix" evidence="15">
    <location>
        <begin position="56"/>
        <end position="58"/>
    </location>
</feature>
<feature type="strand" evidence="16">
    <location>
        <begin position="63"/>
        <end position="65"/>
    </location>
</feature>
<feature type="helix" evidence="15">
    <location>
        <begin position="67"/>
        <end position="75"/>
    </location>
</feature>
<feature type="helix" evidence="15">
    <location>
        <begin position="78"/>
        <end position="102"/>
    </location>
</feature>
<feature type="strand" evidence="15">
    <location>
        <begin position="105"/>
        <end position="111"/>
    </location>
</feature>
<feature type="turn" evidence="15">
    <location>
        <begin position="113"/>
        <end position="119"/>
    </location>
</feature>
<feature type="helix" evidence="15">
    <location>
        <begin position="120"/>
        <end position="123"/>
    </location>
</feature>
<feature type="strand" evidence="15">
    <location>
        <begin position="125"/>
        <end position="131"/>
    </location>
</feature>
<feature type="helix" evidence="15">
    <location>
        <begin position="134"/>
        <end position="145"/>
    </location>
</feature>
<feature type="helix" evidence="15">
    <location>
        <begin position="149"/>
        <end position="158"/>
    </location>
</feature>
<feature type="helix" evidence="15">
    <location>
        <begin position="162"/>
        <end position="168"/>
    </location>
</feature>
<feature type="strand" evidence="15">
    <location>
        <begin position="170"/>
        <end position="174"/>
    </location>
</feature>
<feature type="helix" evidence="14">
    <location>
        <begin position="179"/>
        <end position="181"/>
    </location>
</feature>
<feature type="helix" evidence="15">
    <location>
        <begin position="182"/>
        <end position="199"/>
    </location>
</feature>
<feature type="turn" evidence="15">
    <location>
        <begin position="200"/>
        <end position="202"/>
    </location>
</feature>
<evidence type="ECO:0000255" key="1">
    <source>
        <dbReference type="HAMAP-Rule" id="MF_00376"/>
    </source>
</evidence>
<evidence type="ECO:0000269" key="2">
    <source>
    </source>
</evidence>
<evidence type="ECO:0000269" key="3">
    <source>
    </source>
</evidence>
<evidence type="ECO:0000303" key="4">
    <source>
    </source>
</evidence>
<evidence type="ECO:0000305" key="5"/>
<evidence type="ECO:0000305" key="6">
    <source>
    </source>
</evidence>
<evidence type="ECO:0000305" key="7">
    <source>
    </source>
</evidence>
<evidence type="ECO:0007744" key="8">
    <source>
        <dbReference type="PDB" id="1N3B"/>
    </source>
</evidence>
<evidence type="ECO:0007744" key="9">
    <source>
        <dbReference type="PDB" id="1T3H"/>
    </source>
</evidence>
<evidence type="ECO:0007744" key="10">
    <source>
        <dbReference type="PDB" id="1VHL"/>
    </source>
</evidence>
<evidence type="ECO:0007744" key="11">
    <source>
        <dbReference type="PDB" id="1VHT"/>
    </source>
</evidence>
<evidence type="ECO:0007744" key="12">
    <source>
        <dbReference type="PDB" id="1VIY"/>
    </source>
</evidence>
<evidence type="ECO:0007744" key="13">
    <source>
        <dbReference type="PDB" id="6ARI"/>
    </source>
</evidence>
<evidence type="ECO:0007829" key="14">
    <source>
        <dbReference type="PDB" id="1VHL"/>
    </source>
</evidence>
<evidence type="ECO:0007829" key="15">
    <source>
        <dbReference type="PDB" id="1VHT"/>
    </source>
</evidence>
<evidence type="ECO:0007829" key="16">
    <source>
        <dbReference type="PDB" id="1VIY"/>
    </source>
</evidence>
<keyword id="KW-0002">3D-structure</keyword>
<keyword id="KW-0067">ATP-binding</keyword>
<keyword id="KW-0173">Coenzyme A biosynthesis</keyword>
<keyword id="KW-0963">Cytoplasm</keyword>
<keyword id="KW-0903">Direct protein sequencing</keyword>
<keyword id="KW-0418">Kinase</keyword>
<keyword id="KW-0547">Nucleotide-binding</keyword>
<keyword id="KW-1185">Reference proteome</keyword>
<keyword id="KW-0808">Transferase</keyword>